<gene>
    <name evidence="1" type="primary">rplB</name>
    <name type="ordered locus">SERP1828</name>
</gene>
<sequence>MALKKYKPITNGRRNMTTLDFAEITKTTPEKSLLQPLPKRAGRNNQGKLTVRHHGGGHKRQYRVIDFKRNKDGIIAKVDSIQYDPNRSANIALLVYADGEKRYIIAPKGLQVGQTVESGAEADIKVGNALPLQNIPVGTVIHNIELKPGKGGQLARSAGASSQVLGKEGKYVLIRLRSGEVRMILSTCRATIGQVGNLQHELVNVGKAGRSRWKGVRPTVRGSVMNPNDHPHGGGEGRAPIGRPSPMSPWGKPTLGKKTRRGKKSSDKLIVRGRKKK</sequence>
<proteinExistence type="inferred from homology"/>
<comment type="function">
    <text evidence="1">One of the primary rRNA binding proteins. Required for association of the 30S and 50S subunits to form the 70S ribosome, for tRNA binding and peptide bond formation. It has been suggested to have peptidyltransferase activity; this is somewhat controversial. Makes several contacts with the 16S rRNA in the 70S ribosome.</text>
</comment>
<comment type="subunit">
    <text evidence="1">Part of the 50S ribosomal subunit. Forms a bridge to the 30S subunit in the 70S ribosome.</text>
</comment>
<comment type="similarity">
    <text evidence="1">Belongs to the universal ribosomal protein uL2 family.</text>
</comment>
<evidence type="ECO:0000255" key="1">
    <source>
        <dbReference type="HAMAP-Rule" id="MF_01320"/>
    </source>
</evidence>
<evidence type="ECO:0000256" key="2">
    <source>
        <dbReference type="SAM" id="MobiDB-lite"/>
    </source>
</evidence>
<evidence type="ECO:0000305" key="3"/>
<reference key="1">
    <citation type="journal article" date="2005" name="J. Bacteriol.">
        <title>Insights on evolution of virulence and resistance from the complete genome analysis of an early methicillin-resistant Staphylococcus aureus strain and a biofilm-producing methicillin-resistant Staphylococcus epidermidis strain.</title>
        <authorList>
            <person name="Gill S.R."/>
            <person name="Fouts D.E."/>
            <person name="Archer G.L."/>
            <person name="Mongodin E.F."/>
            <person name="DeBoy R.T."/>
            <person name="Ravel J."/>
            <person name="Paulsen I.T."/>
            <person name="Kolonay J.F."/>
            <person name="Brinkac L.M."/>
            <person name="Beanan M.J."/>
            <person name="Dodson R.J."/>
            <person name="Daugherty S.C."/>
            <person name="Madupu R."/>
            <person name="Angiuoli S.V."/>
            <person name="Durkin A.S."/>
            <person name="Haft D.H."/>
            <person name="Vamathevan J.J."/>
            <person name="Khouri H."/>
            <person name="Utterback T.R."/>
            <person name="Lee C."/>
            <person name="Dimitrov G."/>
            <person name="Jiang L."/>
            <person name="Qin H."/>
            <person name="Weidman J."/>
            <person name="Tran K."/>
            <person name="Kang K.H."/>
            <person name="Hance I.R."/>
            <person name="Nelson K.E."/>
            <person name="Fraser C.M."/>
        </authorList>
    </citation>
    <scope>NUCLEOTIDE SEQUENCE [LARGE SCALE GENOMIC DNA]</scope>
    <source>
        <strain>ATCC 35984 / DSM 28319 / BCRC 17069 / CCUG 31568 / BM 3577 / RP62A</strain>
    </source>
</reference>
<keyword id="KW-1185">Reference proteome</keyword>
<keyword id="KW-0687">Ribonucleoprotein</keyword>
<keyword id="KW-0689">Ribosomal protein</keyword>
<keyword id="KW-0694">RNA-binding</keyword>
<keyword id="KW-0699">rRNA-binding</keyword>
<dbReference type="EMBL" id="CP000029">
    <property type="protein sequence ID" value="AAW55160.1"/>
    <property type="molecule type" value="Genomic_DNA"/>
</dbReference>
<dbReference type="RefSeq" id="WP_001829788.1">
    <property type="nucleotide sequence ID" value="NC_002976.3"/>
</dbReference>
<dbReference type="SMR" id="Q5HM02"/>
<dbReference type="STRING" id="176279.SERP1828"/>
<dbReference type="GeneID" id="50018076"/>
<dbReference type="KEGG" id="ser:SERP1828"/>
<dbReference type="eggNOG" id="COG0090">
    <property type="taxonomic scope" value="Bacteria"/>
</dbReference>
<dbReference type="HOGENOM" id="CLU_036235_2_1_9"/>
<dbReference type="Proteomes" id="UP000000531">
    <property type="component" value="Chromosome"/>
</dbReference>
<dbReference type="GO" id="GO:0015934">
    <property type="term" value="C:large ribosomal subunit"/>
    <property type="evidence" value="ECO:0007669"/>
    <property type="project" value="InterPro"/>
</dbReference>
<dbReference type="GO" id="GO:0019843">
    <property type="term" value="F:rRNA binding"/>
    <property type="evidence" value="ECO:0007669"/>
    <property type="project" value="UniProtKB-UniRule"/>
</dbReference>
<dbReference type="GO" id="GO:0003735">
    <property type="term" value="F:structural constituent of ribosome"/>
    <property type="evidence" value="ECO:0007669"/>
    <property type="project" value="InterPro"/>
</dbReference>
<dbReference type="GO" id="GO:0016740">
    <property type="term" value="F:transferase activity"/>
    <property type="evidence" value="ECO:0007669"/>
    <property type="project" value="InterPro"/>
</dbReference>
<dbReference type="GO" id="GO:0002181">
    <property type="term" value="P:cytoplasmic translation"/>
    <property type="evidence" value="ECO:0007669"/>
    <property type="project" value="TreeGrafter"/>
</dbReference>
<dbReference type="FunFam" id="2.30.30.30:FF:000001">
    <property type="entry name" value="50S ribosomal protein L2"/>
    <property type="match status" value="1"/>
</dbReference>
<dbReference type="FunFam" id="2.40.50.140:FF:000003">
    <property type="entry name" value="50S ribosomal protein L2"/>
    <property type="match status" value="1"/>
</dbReference>
<dbReference type="FunFam" id="4.10.950.10:FF:000001">
    <property type="entry name" value="50S ribosomal protein L2"/>
    <property type="match status" value="1"/>
</dbReference>
<dbReference type="Gene3D" id="2.30.30.30">
    <property type="match status" value="1"/>
</dbReference>
<dbReference type="Gene3D" id="2.40.50.140">
    <property type="entry name" value="Nucleic acid-binding proteins"/>
    <property type="match status" value="1"/>
</dbReference>
<dbReference type="Gene3D" id="4.10.950.10">
    <property type="entry name" value="Ribosomal protein L2, domain 3"/>
    <property type="match status" value="1"/>
</dbReference>
<dbReference type="HAMAP" id="MF_01320_B">
    <property type="entry name" value="Ribosomal_uL2_B"/>
    <property type="match status" value="1"/>
</dbReference>
<dbReference type="InterPro" id="IPR012340">
    <property type="entry name" value="NA-bd_OB-fold"/>
</dbReference>
<dbReference type="InterPro" id="IPR014722">
    <property type="entry name" value="Rib_uL2_dom2"/>
</dbReference>
<dbReference type="InterPro" id="IPR002171">
    <property type="entry name" value="Ribosomal_uL2"/>
</dbReference>
<dbReference type="InterPro" id="IPR005880">
    <property type="entry name" value="Ribosomal_uL2_bac/org-type"/>
</dbReference>
<dbReference type="InterPro" id="IPR022669">
    <property type="entry name" value="Ribosomal_uL2_C"/>
</dbReference>
<dbReference type="InterPro" id="IPR022671">
    <property type="entry name" value="Ribosomal_uL2_CS"/>
</dbReference>
<dbReference type="InterPro" id="IPR014726">
    <property type="entry name" value="Ribosomal_uL2_dom3"/>
</dbReference>
<dbReference type="InterPro" id="IPR022666">
    <property type="entry name" value="Ribosomal_uL2_RNA-bd_dom"/>
</dbReference>
<dbReference type="InterPro" id="IPR008991">
    <property type="entry name" value="Translation_prot_SH3-like_sf"/>
</dbReference>
<dbReference type="NCBIfam" id="TIGR01171">
    <property type="entry name" value="rplB_bact"/>
    <property type="match status" value="1"/>
</dbReference>
<dbReference type="PANTHER" id="PTHR13691:SF5">
    <property type="entry name" value="LARGE RIBOSOMAL SUBUNIT PROTEIN UL2M"/>
    <property type="match status" value="1"/>
</dbReference>
<dbReference type="PANTHER" id="PTHR13691">
    <property type="entry name" value="RIBOSOMAL PROTEIN L2"/>
    <property type="match status" value="1"/>
</dbReference>
<dbReference type="Pfam" id="PF00181">
    <property type="entry name" value="Ribosomal_L2"/>
    <property type="match status" value="1"/>
</dbReference>
<dbReference type="Pfam" id="PF03947">
    <property type="entry name" value="Ribosomal_L2_C"/>
    <property type="match status" value="1"/>
</dbReference>
<dbReference type="PIRSF" id="PIRSF002158">
    <property type="entry name" value="Ribosomal_L2"/>
    <property type="match status" value="1"/>
</dbReference>
<dbReference type="SMART" id="SM01383">
    <property type="entry name" value="Ribosomal_L2"/>
    <property type="match status" value="1"/>
</dbReference>
<dbReference type="SMART" id="SM01382">
    <property type="entry name" value="Ribosomal_L2_C"/>
    <property type="match status" value="1"/>
</dbReference>
<dbReference type="SUPFAM" id="SSF50249">
    <property type="entry name" value="Nucleic acid-binding proteins"/>
    <property type="match status" value="1"/>
</dbReference>
<dbReference type="SUPFAM" id="SSF50104">
    <property type="entry name" value="Translation proteins SH3-like domain"/>
    <property type="match status" value="1"/>
</dbReference>
<dbReference type="PROSITE" id="PS00467">
    <property type="entry name" value="RIBOSOMAL_L2"/>
    <property type="match status" value="1"/>
</dbReference>
<name>RL2_STAEQ</name>
<protein>
    <recommendedName>
        <fullName evidence="1">Large ribosomal subunit protein uL2</fullName>
    </recommendedName>
    <alternativeName>
        <fullName evidence="3">50S ribosomal protein L2</fullName>
    </alternativeName>
</protein>
<accession>Q5HM02</accession>
<feature type="chain" id="PRO_0000129622" description="Large ribosomal subunit protein uL2">
    <location>
        <begin position="1"/>
        <end position="277"/>
    </location>
</feature>
<feature type="region of interest" description="Disordered" evidence="2">
    <location>
        <begin position="211"/>
        <end position="277"/>
    </location>
</feature>
<organism>
    <name type="scientific">Staphylococcus epidermidis (strain ATCC 35984 / DSM 28319 / BCRC 17069 / CCUG 31568 / BM 3577 / RP62A)</name>
    <dbReference type="NCBI Taxonomy" id="176279"/>
    <lineage>
        <taxon>Bacteria</taxon>
        <taxon>Bacillati</taxon>
        <taxon>Bacillota</taxon>
        <taxon>Bacilli</taxon>
        <taxon>Bacillales</taxon>
        <taxon>Staphylococcaceae</taxon>
        <taxon>Staphylococcus</taxon>
    </lineage>
</organism>